<protein>
    <recommendedName>
        <fullName>Subtilisin-like protease CPC735_023170</fullName>
        <ecNumber>3.4.21.-</ecNumber>
    </recommendedName>
</protein>
<feature type="signal peptide" evidence="2">
    <location>
        <begin position="1"/>
        <end position="20"/>
    </location>
</feature>
<feature type="propeptide" id="PRO_0000407006" evidence="1">
    <location>
        <begin position="21"/>
        <end position="118"/>
    </location>
</feature>
<feature type="chain" id="PRO_0000407007" description="Subtilisin-like protease CPC735_023170">
    <location>
        <begin position="119"/>
        <end position="406"/>
    </location>
</feature>
<feature type="domain" description="Inhibitor I9" evidence="2">
    <location>
        <begin position="35"/>
        <end position="115"/>
    </location>
</feature>
<feature type="domain" description="Peptidase S8" evidence="3">
    <location>
        <begin position="127"/>
        <end position="406"/>
    </location>
</feature>
<feature type="region of interest" description="Disordered" evidence="4">
    <location>
        <begin position="283"/>
        <end position="309"/>
    </location>
</feature>
<feature type="active site" description="Charge relay system" evidence="3">
    <location>
        <position position="161"/>
    </location>
</feature>
<feature type="active site" description="Charge relay system" evidence="3">
    <location>
        <position position="192"/>
    </location>
</feature>
<feature type="active site" description="Charge relay system" evidence="3">
    <location>
        <position position="351"/>
    </location>
</feature>
<feature type="glycosylation site" description="N-linked (GlcNAc...) asparagine" evidence="2">
    <location>
        <position position="125"/>
    </location>
</feature>
<feature type="glycosylation site" description="N-linked (GlcNAc...) asparagine" evidence="2">
    <location>
        <position position="239"/>
    </location>
</feature>
<feature type="glycosylation site" description="N-linked (GlcNAc...) asparagine" evidence="2">
    <location>
        <position position="346"/>
    </location>
</feature>
<feature type="glycosylation site" description="N-linked (GlcNAc...) asparagine" evidence="2">
    <location>
        <position position="402"/>
    </location>
</feature>
<keyword id="KW-0325">Glycoprotein</keyword>
<keyword id="KW-0378">Hydrolase</keyword>
<keyword id="KW-0645">Protease</keyword>
<keyword id="KW-0964">Secreted</keyword>
<keyword id="KW-0720">Serine protease</keyword>
<keyword id="KW-0732">Signal</keyword>
<keyword id="KW-0843">Virulence</keyword>
<keyword id="KW-0865">Zymogen</keyword>
<comment type="function">
    <text evidence="1">Secreted subtilisin-like serine protease with keratinolytic activity that contributes to pathogenicity.</text>
</comment>
<comment type="subcellular location">
    <subcellularLocation>
        <location evidence="1">Secreted</location>
    </subcellularLocation>
</comment>
<comment type="similarity">
    <text evidence="5">Belongs to the peptidase S8 family.</text>
</comment>
<accession>C5P6D1</accession>
<sequence>MRLFQSTCVLVGTVLPLFTAFPISSPREIEIIPDKYIITFKKGIDQAAIEAHTAWVSSVQARNTARGFTTAETPGLERMFSIHNFNAYSGSFDRETIEEIRSHPNVESVEPDSMAYVTELIEQRNATYGPRRISHREIPTGDNSYWYDSKAGEGSFVYIMDTGINKAHVDFEGRAIPGVNLHDVAFDDTHGHGSHCAGIAGSKTYGVAKKATIVDVKVFTRGGGAWSLLMGGLDWSVKNITGEDRQAKSAVSISISGPTNQAMNNAVKAAVEAGVTVVVASGNDGRDAGRNSPGSAPESITVGSINSRRGMDTRSSFSNYGSSVAIHAPGEGIISTYKGSRDATANMSGTSMAAPHVAGLIAYLQSIHDLPDPAAARRKLLELATSDKIQDVRGSANKLAYNGSGK</sequence>
<name>SUB2A_COCP7</name>
<proteinExistence type="inferred from homology"/>
<organism>
    <name type="scientific">Coccidioides posadasii (strain C735)</name>
    <name type="common">Valley fever fungus</name>
    <dbReference type="NCBI Taxonomy" id="222929"/>
    <lineage>
        <taxon>Eukaryota</taxon>
        <taxon>Fungi</taxon>
        <taxon>Dikarya</taxon>
        <taxon>Ascomycota</taxon>
        <taxon>Pezizomycotina</taxon>
        <taxon>Eurotiomycetes</taxon>
        <taxon>Eurotiomycetidae</taxon>
        <taxon>Onygenales</taxon>
        <taxon>Onygenaceae</taxon>
        <taxon>Coccidioides</taxon>
    </lineage>
</organism>
<evidence type="ECO:0000250" key="1"/>
<evidence type="ECO:0000255" key="2"/>
<evidence type="ECO:0000255" key="3">
    <source>
        <dbReference type="PROSITE-ProRule" id="PRU01240"/>
    </source>
</evidence>
<evidence type="ECO:0000256" key="4">
    <source>
        <dbReference type="SAM" id="MobiDB-lite"/>
    </source>
</evidence>
<evidence type="ECO:0000305" key="5"/>
<gene>
    <name type="ORF">CPC735_023170</name>
</gene>
<reference key="1">
    <citation type="journal article" date="2009" name="Genome Res.">
        <title>Comparative genomic analyses of the human fungal pathogens Coccidioides and their relatives.</title>
        <authorList>
            <person name="Sharpton T.J."/>
            <person name="Stajich J.E."/>
            <person name="Rounsley S.D."/>
            <person name="Gardner M.J."/>
            <person name="Wortman J.R."/>
            <person name="Jordar V.S."/>
            <person name="Maiti R."/>
            <person name="Kodira C.D."/>
            <person name="Neafsey D.E."/>
            <person name="Zeng Q."/>
            <person name="Hung C.-Y."/>
            <person name="McMahan C."/>
            <person name="Muszewska A."/>
            <person name="Grynberg M."/>
            <person name="Mandel M.A."/>
            <person name="Kellner E.M."/>
            <person name="Barker B.M."/>
            <person name="Galgiani J.N."/>
            <person name="Orbach M.J."/>
            <person name="Kirkland T.N."/>
            <person name="Cole G.T."/>
            <person name="Henn M.R."/>
            <person name="Birren B.W."/>
            <person name="Taylor J.W."/>
        </authorList>
    </citation>
    <scope>NUCLEOTIDE SEQUENCE [LARGE SCALE GENOMIC DNA]</scope>
    <source>
        <strain>C735</strain>
    </source>
</reference>
<dbReference type="EC" id="3.4.21.-"/>
<dbReference type="EMBL" id="ACFW01000025">
    <property type="protein sequence ID" value="EER26981.1"/>
    <property type="molecule type" value="Genomic_DNA"/>
</dbReference>
<dbReference type="RefSeq" id="XP_003069126.1">
    <property type="nucleotide sequence ID" value="XM_003069080.1"/>
</dbReference>
<dbReference type="SMR" id="C5P6D1"/>
<dbReference type="KEGG" id="cpw:9694621"/>
<dbReference type="VEuPathDB" id="FungiDB:CPC735_023170"/>
<dbReference type="HOGENOM" id="CLU_011263_1_4_1"/>
<dbReference type="OrthoDB" id="206201at2759"/>
<dbReference type="Proteomes" id="UP000009084">
    <property type="component" value="Unassembled WGS sequence"/>
</dbReference>
<dbReference type="GO" id="GO:0005576">
    <property type="term" value="C:extracellular region"/>
    <property type="evidence" value="ECO:0007669"/>
    <property type="project" value="UniProtKB-SubCell"/>
</dbReference>
<dbReference type="GO" id="GO:0004252">
    <property type="term" value="F:serine-type endopeptidase activity"/>
    <property type="evidence" value="ECO:0007669"/>
    <property type="project" value="InterPro"/>
</dbReference>
<dbReference type="GO" id="GO:0006508">
    <property type="term" value="P:proteolysis"/>
    <property type="evidence" value="ECO:0007669"/>
    <property type="project" value="UniProtKB-KW"/>
</dbReference>
<dbReference type="CDD" id="cd04077">
    <property type="entry name" value="Peptidases_S8_PCSK9_ProteinaseK_like"/>
    <property type="match status" value="1"/>
</dbReference>
<dbReference type="FunFam" id="3.40.50.200:FF:000007">
    <property type="entry name" value="Subtilisin-like serine protease"/>
    <property type="match status" value="1"/>
</dbReference>
<dbReference type="Gene3D" id="3.30.70.80">
    <property type="entry name" value="Peptidase S8 propeptide/proteinase inhibitor I9"/>
    <property type="match status" value="1"/>
</dbReference>
<dbReference type="Gene3D" id="3.40.50.200">
    <property type="entry name" value="Peptidase S8/S53 domain"/>
    <property type="match status" value="1"/>
</dbReference>
<dbReference type="InterPro" id="IPR034193">
    <property type="entry name" value="PCSK9_ProteinaseK-like"/>
</dbReference>
<dbReference type="InterPro" id="IPR000209">
    <property type="entry name" value="Peptidase_S8/S53_dom"/>
</dbReference>
<dbReference type="InterPro" id="IPR036852">
    <property type="entry name" value="Peptidase_S8/S53_dom_sf"/>
</dbReference>
<dbReference type="InterPro" id="IPR023827">
    <property type="entry name" value="Peptidase_S8_Asp-AS"/>
</dbReference>
<dbReference type="InterPro" id="IPR022398">
    <property type="entry name" value="Peptidase_S8_His-AS"/>
</dbReference>
<dbReference type="InterPro" id="IPR023828">
    <property type="entry name" value="Peptidase_S8_Ser-AS"/>
</dbReference>
<dbReference type="InterPro" id="IPR050131">
    <property type="entry name" value="Peptidase_S8_subtilisin-like"/>
</dbReference>
<dbReference type="InterPro" id="IPR015500">
    <property type="entry name" value="Peptidase_S8_subtilisin-rel"/>
</dbReference>
<dbReference type="InterPro" id="IPR010259">
    <property type="entry name" value="S8pro/Inhibitor_I9"/>
</dbReference>
<dbReference type="InterPro" id="IPR037045">
    <property type="entry name" value="S8pro/Inhibitor_I9_sf"/>
</dbReference>
<dbReference type="PANTHER" id="PTHR43806:SF11">
    <property type="entry name" value="CEREVISIN-RELATED"/>
    <property type="match status" value="1"/>
</dbReference>
<dbReference type="PANTHER" id="PTHR43806">
    <property type="entry name" value="PEPTIDASE S8"/>
    <property type="match status" value="1"/>
</dbReference>
<dbReference type="Pfam" id="PF05922">
    <property type="entry name" value="Inhibitor_I9"/>
    <property type="match status" value="1"/>
</dbReference>
<dbReference type="Pfam" id="PF00082">
    <property type="entry name" value="Peptidase_S8"/>
    <property type="match status" value="1"/>
</dbReference>
<dbReference type="PRINTS" id="PR00723">
    <property type="entry name" value="SUBTILISIN"/>
</dbReference>
<dbReference type="SUPFAM" id="SSF52743">
    <property type="entry name" value="Subtilisin-like"/>
    <property type="match status" value="1"/>
</dbReference>
<dbReference type="PROSITE" id="PS51892">
    <property type="entry name" value="SUBTILASE"/>
    <property type="match status" value="1"/>
</dbReference>
<dbReference type="PROSITE" id="PS00136">
    <property type="entry name" value="SUBTILASE_ASP"/>
    <property type="match status" value="1"/>
</dbReference>
<dbReference type="PROSITE" id="PS00137">
    <property type="entry name" value="SUBTILASE_HIS"/>
    <property type="match status" value="1"/>
</dbReference>
<dbReference type="PROSITE" id="PS00138">
    <property type="entry name" value="SUBTILASE_SER"/>
    <property type="match status" value="1"/>
</dbReference>